<organism>
    <name type="scientific">Aeromonas salmonicida (strain A449)</name>
    <dbReference type="NCBI Taxonomy" id="382245"/>
    <lineage>
        <taxon>Bacteria</taxon>
        <taxon>Pseudomonadati</taxon>
        <taxon>Pseudomonadota</taxon>
        <taxon>Gammaproteobacteria</taxon>
        <taxon>Aeromonadales</taxon>
        <taxon>Aeromonadaceae</taxon>
        <taxon>Aeromonas</taxon>
    </lineage>
</organism>
<name>FIS_AERS4</name>
<sequence>MFEQTLTSDALVTTTHNHAAEPTQRPLRDSVQQALRNYLAQLNGQEVIDLYDMVLSEVEAPMLDVIMQYTRGNQTRAAVMMGINRGTLRKKLKRYGMN</sequence>
<keyword id="KW-0010">Activator</keyword>
<keyword id="KW-0238">DNA-binding</keyword>
<keyword id="KW-0804">Transcription</keyword>
<keyword id="KW-0805">Transcription regulation</keyword>
<feature type="chain" id="PRO_1000023321" description="DNA-binding protein Fis">
    <location>
        <begin position="1"/>
        <end position="98"/>
    </location>
</feature>
<feature type="DNA-binding region" description="H-T-H motif" evidence="1">
    <location>
        <begin position="74"/>
        <end position="93"/>
    </location>
</feature>
<reference key="1">
    <citation type="journal article" date="2008" name="BMC Genomics">
        <title>The genome of Aeromonas salmonicida subsp. salmonicida A449: insights into the evolution of a fish pathogen.</title>
        <authorList>
            <person name="Reith M.E."/>
            <person name="Singh R.K."/>
            <person name="Curtis B."/>
            <person name="Boyd J.M."/>
            <person name="Bouevitch A."/>
            <person name="Kimball J."/>
            <person name="Munholland J."/>
            <person name="Murphy C."/>
            <person name="Sarty D."/>
            <person name="Williams J."/>
            <person name="Nash J.H."/>
            <person name="Johnson S.C."/>
            <person name="Brown L.L."/>
        </authorList>
    </citation>
    <scope>NUCLEOTIDE SEQUENCE [LARGE SCALE GENOMIC DNA]</scope>
    <source>
        <strain>A449</strain>
    </source>
</reference>
<gene>
    <name evidence="1" type="primary">fis</name>
    <name type="ordered locus">ASA_0807</name>
</gene>
<accession>A4SJ84</accession>
<proteinExistence type="inferred from homology"/>
<comment type="function">
    <text evidence="1">Activates ribosomal RNA transcription. Plays a direct role in upstream activation of rRNA promoters.</text>
</comment>
<comment type="subunit">
    <text evidence="1">Homodimer.</text>
</comment>
<comment type="similarity">
    <text evidence="1">Belongs to the transcriptional regulatory Fis family.</text>
</comment>
<protein>
    <recommendedName>
        <fullName evidence="1">DNA-binding protein Fis</fullName>
    </recommendedName>
</protein>
<dbReference type="EMBL" id="CP000644">
    <property type="protein sequence ID" value="ABO88956.1"/>
    <property type="molecule type" value="Genomic_DNA"/>
</dbReference>
<dbReference type="RefSeq" id="WP_005309538.1">
    <property type="nucleotide sequence ID" value="NC_009348.1"/>
</dbReference>
<dbReference type="SMR" id="A4SJ84"/>
<dbReference type="STRING" id="29491.GCA_000820065_03847"/>
<dbReference type="GeneID" id="97857240"/>
<dbReference type="KEGG" id="asa:ASA_0807"/>
<dbReference type="eggNOG" id="COG2901">
    <property type="taxonomic scope" value="Bacteria"/>
</dbReference>
<dbReference type="HOGENOM" id="CLU_158040_3_0_6"/>
<dbReference type="Proteomes" id="UP000000225">
    <property type="component" value="Chromosome"/>
</dbReference>
<dbReference type="GO" id="GO:0003700">
    <property type="term" value="F:DNA-binding transcription factor activity"/>
    <property type="evidence" value="ECO:0007669"/>
    <property type="project" value="UniProtKB-UniRule"/>
</dbReference>
<dbReference type="GO" id="GO:0043565">
    <property type="term" value="F:sequence-specific DNA binding"/>
    <property type="evidence" value="ECO:0007669"/>
    <property type="project" value="InterPro"/>
</dbReference>
<dbReference type="FunFam" id="1.10.10.60:FF:000006">
    <property type="entry name" value="DNA-binding protein Fis"/>
    <property type="match status" value="1"/>
</dbReference>
<dbReference type="Gene3D" id="1.10.10.60">
    <property type="entry name" value="Homeodomain-like"/>
    <property type="match status" value="1"/>
</dbReference>
<dbReference type="HAMAP" id="MF_00166">
    <property type="entry name" value="DNA_binding_Fis"/>
    <property type="match status" value="1"/>
</dbReference>
<dbReference type="InterPro" id="IPR005412">
    <property type="entry name" value="Fis_DNA-bd"/>
</dbReference>
<dbReference type="InterPro" id="IPR009057">
    <property type="entry name" value="Homeodomain-like_sf"/>
</dbReference>
<dbReference type="InterPro" id="IPR002197">
    <property type="entry name" value="HTH_Fis"/>
</dbReference>
<dbReference type="InterPro" id="IPR050207">
    <property type="entry name" value="Trans_regulatory_Fis"/>
</dbReference>
<dbReference type="NCBIfam" id="NF001659">
    <property type="entry name" value="PRK00430.1"/>
    <property type="match status" value="1"/>
</dbReference>
<dbReference type="PANTHER" id="PTHR47918">
    <property type="entry name" value="DNA-BINDING PROTEIN FIS"/>
    <property type="match status" value="1"/>
</dbReference>
<dbReference type="PANTHER" id="PTHR47918:SF1">
    <property type="entry name" value="DNA-BINDING PROTEIN FIS"/>
    <property type="match status" value="1"/>
</dbReference>
<dbReference type="Pfam" id="PF02954">
    <property type="entry name" value="HTH_8"/>
    <property type="match status" value="1"/>
</dbReference>
<dbReference type="PIRSF" id="PIRSF002097">
    <property type="entry name" value="DNA-binding_Fis"/>
    <property type="match status" value="1"/>
</dbReference>
<dbReference type="PRINTS" id="PR01591">
    <property type="entry name" value="DNABINDNGFIS"/>
</dbReference>
<dbReference type="PRINTS" id="PR01590">
    <property type="entry name" value="HTHFIS"/>
</dbReference>
<dbReference type="SUPFAM" id="SSF46689">
    <property type="entry name" value="Homeodomain-like"/>
    <property type="match status" value="1"/>
</dbReference>
<evidence type="ECO:0000255" key="1">
    <source>
        <dbReference type="HAMAP-Rule" id="MF_00166"/>
    </source>
</evidence>